<feature type="initiator methionine" description="Removed" evidence="8 30 31">
    <location>
        <position position="1"/>
    </location>
</feature>
<feature type="chain" id="PRO_0000058779" description="Serine/threonine-protein phosphatase PP1-beta catalytic subunit">
    <location>
        <begin position="2"/>
        <end position="327"/>
    </location>
</feature>
<feature type="region of interest" description="Disordered" evidence="3">
    <location>
        <begin position="305"/>
        <end position="327"/>
    </location>
</feature>
<feature type="active site" description="Proton donor" evidence="1">
    <location>
        <position position="124"/>
    </location>
</feature>
<feature type="binding site" evidence="1">
    <location>
        <position position="63"/>
    </location>
    <ligand>
        <name>Mn(2+)</name>
        <dbReference type="ChEBI" id="CHEBI:29035"/>
        <label>1</label>
    </ligand>
</feature>
<feature type="binding site" evidence="1">
    <location>
        <position position="65"/>
    </location>
    <ligand>
        <name>Mn(2+)</name>
        <dbReference type="ChEBI" id="CHEBI:29035"/>
        <label>1</label>
    </ligand>
</feature>
<feature type="binding site" evidence="1">
    <location>
        <position position="91"/>
    </location>
    <ligand>
        <name>Mn(2+)</name>
        <dbReference type="ChEBI" id="CHEBI:29035"/>
        <label>1</label>
    </ligand>
</feature>
<feature type="binding site" evidence="1">
    <location>
        <position position="91"/>
    </location>
    <ligand>
        <name>Mn(2+)</name>
        <dbReference type="ChEBI" id="CHEBI:29035"/>
        <label>2</label>
    </ligand>
</feature>
<feature type="binding site" evidence="1">
    <location>
        <position position="123"/>
    </location>
    <ligand>
        <name>Mn(2+)</name>
        <dbReference type="ChEBI" id="CHEBI:29035"/>
        <label>2</label>
    </ligand>
</feature>
<feature type="binding site" evidence="1">
    <location>
        <position position="172"/>
    </location>
    <ligand>
        <name>Mn(2+)</name>
        <dbReference type="ChEBI" id="CHEBI:29035"/>
        <label>2</label>
    </ligand>
</feature>
<feature type="binding site" evidence="1">
    <location>
        <position position="247"/>
    </location>
    <ligand>
        <name>Mn(2+)</name>
        <dbReference type="ChEBI" id="CHEBI:29035"/>
        <label>2</label>
    </ligand>
</feature>
<feature type="modified residue" description="N-acetylalanine" evidence="8 30 31">
    <location>
        <position position="2"/>
    </location>
</feature>
<feature type="modified residue" description="Phosphothreonine" evidence="29 32">
    <location>
        <position position="316"/>
    </location>
</feature>
<feature type="sequence variant" id="VAR_076839" description="In NSLH2; dbSNP:rs886037952." evidence="19 20 21 22 24">
    <original>P</original>
    <variation>R</variation>
    <location>
        <position position="49"/>
    </location>
</feature>
<feature type="sequence variant" id="VAR_076840" description="In NSLH2; dbSNP:rs1114167429." evidence="19">
    <original>A</original>
    <variation>P</variation>
    <location>
        <position position="56"/>
    </location>
</feature>
<feature type="sequence variant" id="VAR_079189" description="In NSLH2; dbSNP:rs886037954." evidence="20">
    <original>E</original>
    <variation>A</variation>
    <location>
        <position position="183"/>
    </location>
</feature>
<feature type="sequence variant" id="VAR_079190" description="In NSLH2; dbSNP:rs886037954." evidence="20">
    <original>E</original>
    <variation>V</variation>
    <location>
        <position position="183"/>
    </location>
</feature>
<feature type="sequence variant" id="VAR_079191" description="In NSLH2; dbSNP:rs886037953." evidence="20">
    <original>D</original>
    <variation>Y</variation>
    <location>
        <position position="252"/>
    </location>
</feature>
<feature type="sequence variant" id="VAR_079192" description="In NSLH2; uncertain significance; dbSNP:rs886037955." evidence="20">
    <original>E</original>
    <variation>K</variation>
    <location>
        <position position="274"/>
    </location>
</feature>
<feature type="sequence conflict" description="In Ref. 5; AAV38549." evidence="28" ref="5">
    <original>L</original>
    <variation>P</variation>
    <location>
        <position position="51"/>
    </location>
</feature>
<comment type="function">
    <text evidence="14 16 17 25 26 27">Protein phosphatase that associates with over 200 regulatory proteins to form highly specific holoenzymes which dephosphorylate hundreds of biological targets. Protein phosphatase (PP1) is essential for cell division, it participates in the regulation of glycogen metabolism, muscle contractility and protein synthesis. Involved in regulation of ionic conductances and long-term synaptic plasticity. Component of the PTW/PP1 phosphatase complex, which plays a role in the control of chromatin structure and cell cycle progression during the transition from mitosis into interphase. In balance with CSNK1D and CSNK1E, determines the circadian period length, through the regulation of the speed and rhythmicity of PER1 and PER2 phosphorylation. May dephosphorylate CSNK1D and CSNK1E. Dephosphorylates the 'Ser-418' residue of FOXP3 in regulatory T-cells (Treg) from patients with rheumatoid arthritis, thereby inactivating FOXP3 and rendering Treg cells functionally defective (PubMed:23396208). Core component of the SHOC2-MRAS-PP1c (SMP) holophosphatase complex that regulates the MAPK pathway activation (PubMed:35768504, PubMed:35831509, PubMed:36175670). The SMP complex specifically dephosphorylates the inhibitory phosphorylation at 'Ser-259' of RAF1 kinase, 'Ser-365' of BRAF kinase and 'Ser-214' of ARAF kinase, stimulating their kinase activities (PubMed:35768504, PubMed:35831509, PubMed:36175670). The SMP complex enhances the dephosphorylation activity and substrate specificity of PP1c (PubMed:35768504, PubMed:36175670).</text>
</comment>
<comment type="catalytic activity">
    <reaction evidence="25 26 27">
        <text>O-phospho-L-seryl-[protein] + H2O = L-seryl-[protein] + phosphate</text>
        <dbReference type="Rhea" id="RHEA:20629"/>
        <dbReference type="Rhea" id="RHEA-COMP:9863"/>
        <dbReference type="Rhea" id="RHEA-COMP:11604"/>
        <dbReference type="ChEBI" id="CHEBI:15377"/>
        <dbReference type="ChEBI" id="CHEBI:29999"/>
        <dbReference type="ChEBI" id="CHEBI:43474"/>
        <dbReference type="ChEBI" id="CHEBI:83421"/>
        <dbReference type="EC" id="3.1.3.16"/>
    </reaction>
</comment>
<comment type="catalytic activity">
    <reaction>
        <text>O-phospho-L-threonyl-[protein] + H2O = L-threonyl-[protein] + phosphate</text>
        <dbReference type="Rhea" id="RHEA:47004"/>
        <dbReference type="Rhea" id="RHEA-COMP:11060"/>
        <dbReference type="Rhea" id="RHEA-COMP:11605"/>
        <dbReference type="ChEBI" id="CHEBI:15377"/>
        <dbReference type="ChEBI" id="CHEBI:30013"/>
        <dbReference type="ChEBI" id="CHEBI:43474"/>
        <dbReference type="ChEBI" id="CHEBI:61977"/>
        <dbReference type="EC" id="3.1.3.16"/>
    </reaction>
</comment>
<comment type="catalytic activity">
    <reaction>
        <text>O-phospho-L-seryl-[myosin light chain] + H2O = L-seryl-[myosin light chain] + phosphate</text>
        <dbReference type="Rhea" id="RHEA:12849"/>
        <dbReference type="Rhea" id="RHEA-COMP:13684"/>
        <dbReference type="Rhea" id="RHEA-COMP:13685"/>
        <dbReference type="ChEBI" id="CHEBI:15377"/>
        <dbReference type="ChEBI" id="CHEBI:29999"/>
        <dbReference type="ChEBI" id="CHEBI:43474"/>
        <dbReference type="ChEBI" id="CHEBI:83421"/>
        <dbReference type="EC" id="3.1.3.53"/>
    </reaction>
</comment>
<comment type="catalytic activity">
    <reaction>
        <text>O-phospho-L-threonyl-[myosin light chain] + H2O = L-threonyl-[myosin light chain] + phosphate</text>
        <dbReference type="Rhea" id="RHEA:53988"/>
        <dbReference type="Rhea" id="RHEA-COMP:13686"/>
        <dbReference type="Rhea" id="RHEA-COMP:13687"/>
        <dbReference type="ChEBI" id="CHEBI:15377"/>
        <dbReference type="ChEBI" id="CHEBI:30013"/>
        <dbReference type="ChEBI" id="CHEBI:43474"/>
        <dbReference type="ChEBI" id="CHEBI:61977"/>
        <dbReference type="EC" id="3.1.3.53"/>
    </reaction>
</comment>
<comment type="cofactor">
    <cofactor evidence="1">
        <name>Mn(2+)</name>
        <dbReference type="ChEBI" id="CHEBI:29035"/>
    </cofactor>
    <text evidence="1">Binds 2 manganese ions per subunit.</text>
</comment>
<comment type="activity regulation">
    <text evidence="1 9">Inhibited by the toxins okadaic acid, tautomycin and microcystin Leu-Arg (By similarity). The phosphatase activity of the PPP1R15A-PP1 complex toward EIF2S1 is specifically inhibited by Salubrinal, a drug that protects cells from endoplasmic reticulum stress.</text>
</comment>
<comment type="subunit">
    <text evidence="2 4 5 7 10 12 13 14 15 17 23 24 25 26 27">PP1 comprises a catalytic subunit, PPP1CA, PPP1CB or PPP1CC, which is folded into its native form by inhibitor 2 and glycogen synthetase kinase 3, and then complexed to one or several targeting or regulatory subunits. The targeting or regulatory subunits determine the substrate specificity of PP1. PPP1R12A, PPP1R12B and PPP1R12C mediate binding to myosin. PPP1R3A (in skeletal muscle), PPP1R3B (in liver), PPP1R3C, PPP1R3D and PPP1R3F (in brain) mediate binding to glycogen. Part of a complex containing PPP1R15B, PP1 and NCK1/2 (By similarity). Interacts with PPP1R7 and PPP1R12C. PPP1R15A and PPP1R15B mediate binding to EIF2S1. Interacts with PPP1R16B. Component of the PTW/PP1 phosphatase complex, composed of PPP1R10/PNUTS, TOX4, WDR82, and PPP1CA or PPP1CB or PPP1CC. Interacts with PPP1R8. Interacts with TRIM28; the interaction is weak. Interacts with PPP1R12A and NUAK1; the interaction is direct. Interacts with FOXP3. Interacts with RRP1B (PubMed:20926688). Interacts with SERPINE1 (PubMed:28296156). Interacts with LZTR1 (PubMed:30368668). Component of the SHOC2-MRAS-PP1c (SMP) complex consisting of SHOC2, GTP-bound M-Ras/MRAS and the catalytic subunit of protein phosphatase 1 (either PPP1CA, PPP1CB or PPP1CC) (PubMed:35768504, PubMed:35831509, PubMed:36175670). SHOC2 and PP1c preferably bind M-Ras/MRAS, but they also bind K-Ras/KRAS, N-Ras/NRAS and H-Ras/HRAS; these interactions are GTP-dependent and both SHOC2 and PP1c are required to form a stable complex (PubMed:35768504, PubMed:35831509, PubMed:36175670). Interacts with SHOC2 in the absence of Ras GTPases (PubMed:35768504, PubMed:35831509).</text>
</comment>
<comment type="interaction">
    <interactant intactId="EBI-352350">
        <id>P62140</id>
    </interactant>
    <interactant intactId="EBI-77797">
        <id>P35609</id>
        <label>ACTN2</label>
    </interactant>
    <organismsDiffer>false</organismsDiffer>
    <experiments>3</experiments>
</comment>
<comment type="interaction">
    <interactant intactId="EBI-352350">
        <id>P62140</id>
    </interactant>
    <interactant intactId="EBI-349905">
        <id>P38398</id>
        <label>BRCA1</label>
    </interactant>
    <organismsDiffer>false</organismsDiffer>
    <experiments>3</experiments>
</comment>
<comment type="interaction">
    <interactant intactId="EBI-352350">
        <id>P62140</id>
    </interactant>
    <interactant intactId="EBI-743375">
        <id>Q9NX63</id>
        <label>CHCHD3</label>
    </interactant>
    <organismsDiffer>false</organismsDiffer>
    <experiments>3</experiments>
</comment>
<comment type="interaction">
    <interactant intactId="EBI-352350">
        <id>P62140</id>
    </interactant>
    <interactant intactId="EBI-4311573">
        <id>Q96S65</id>
        <label>CSRNP1</label>
    </interactant>
    <organismsDiffer>false</organismsDiffer>
    <experiments>4</experiments>
</comment>
<comment type="interaction">
    <interactant intactId="EBI-352350">
        <id>P62140</id>
    </interactant>
    <interactant intactId="EBI-5235958">
        <id>Q9H175</id>
        <label>CSRNP2</label>
    </interactant>
    <organismsDiffer>false</organismsDiffer>
    <experiments>7</experiments>
</comment>
<comment type="interaction">
    <interactant intactId="EBI-352350">
        <id>P62140</id>
    </interactant>
    <interactant intactId="EBI-3867333">
        <id>A8MQ03</id>
        <label>CYSRT1</label>
    </interactant>
    <organismsDiffer>false</organismsDiffer>
    <experiments>3</experiments>
</comment>
<comment type="interaction">
    <interactant intactId="EBI-352350">
        <id>P62140</id>
    </interactant>
    <interactant intactId="EBI-2556193">
        <id>Q63ZY3</id>
        <label>KANK2</label>
    </interactant>
    <organismsDiffer>false</organismsDiffer>
    <experiments>3</experiments>
</comment>
<comment type="interaction">
    <interactant intactId="EBI-352350">
        <id>P62140</id>
    </interactant>
    <interactant intactId="EBI-16439278">
        <id>Q6FHY5</id>
        <label>MEOX2</label>
    </interactant>
    <organismsDiffer>false</organismsDiffer>
    <experiments>3</experiments>
</comment>
<comment type="interaction">
    <interactant intactId="EBI-352350">
        <id>P62140</id>
    </interactant>
    <interactant intactId="EBI-12051377">
        <id>Q8N912</id>
        <label>NRAC</label>
    </interactant>
    <organismsDiffer>false</organismsDiffer>
    <experiments>3</experiments>
</comment>
<comment type="interaction">
    <interactant intactId="EBI-352350">
        <id>P62140</id>
    </interactant>
    <interactant intactId="EBI-717068">
        <id>Q96KR7</id>
        <label>PHACTR3</label>
    </interactant>
    <organismsDiffer>false</organismsDiffer>
    <experiments>3</experiments>
</comment>
<comment type="interaction">
    <interactant intactId="EBI-352350">
        <id>P62140</id>
    </interactant>
    <interactant intactId="EBI-1048104">
        <id>O60927</id>
        <label>PPP1R11</label>
    </interactant>
    <organismsDiffer>false</organismsDiffer>
    <experiments>8</experiments>
</comment>
<comment type="interaction">
    <interactant intactId="EBI-352350">
        <id>P62140</id>
    </interactant>
    <interactant intactId="EBI-16434210">
        <id>A0A0S2Z4Q8</id>
        <label>PPP1R12B</label>
    </interactant>
    <organismsDiffer>false</organismsDiffer>
    <experiments>3</experiments>
</comment>
<comment type="interaction">
    <interactant intactId="EBI-352350">
        <id>P62140</id>
    </interactant>
    <interactant intactId="EBI-5550163">
        <id>Q8WUF5</id>
        <label>PPP1R13L</label>
    </interactant>
    <organismsDiffer>false</organismsDiffer>
    <experiments>7</experiments>
</comment>
<comment type="interaction">
    <interactant intactId="EBI-352350">
        <id>P62140</id>
    </interactant>
    <interactant intactId="EBI-710402">
        <id>Q96I34</id>
        <label>PPP1R16A</label>
    </interactant>
    <organismsDiffer>false</organismsDiffer>
    <experiments>10</experiments>
</comment>
<comment type="interaction">
    <interactant intactId="EBI-352350">
        <id>P62140</id>
    </interactant>
    <interactant intactId="EBI-10293968">
        <id>Q96T49</id>
        <label>PPP1R16B</label>
    </interactant>
    <organismsDiffer>false</organismsDiffer>
    <experiments>6</experiments>
</comment>
<comment type="interaction">
    <interactant intactId="EBI-352350">
        <id>P62140</id>
    </interactant>
    <interactant intactId="EBI-5235602">
        <id>Q86WC6</id>
        <label>PPP1R27</label>
    </interactant>
    <organismsDiffer>false</organismsDiffer>
    <experiments>3</experiments>
</comment>
<comment type="interaction">
    <interactant intactId="EBI-352350">
        <id>P62140</id>
    </interactant>
    <interactant intactId="EBI-10251630">
        <id>Q6NXS1</id>
        <label>PPP1R2B</label>
    </interactant>
    <organismsDiffer>false</organismsDiffer>
    <experiments>8</experiments>
</comment>
<comment type="interaction">
    <interactant intactId="EBI-352350">
        <id>P62140</id>
    </interactant>
    <interactant intactId="EBI-12404293">
        <id>O14990</id>
        <label>PPP1R2C</label>
    </interactant>
    <organismsDiffer>false</organismsDiffer>
    <experiments>5</experiments>
</comment>
<comment type="interaction">
    <interactant intactId="EBI-352350">
        <id>P62140</id>
    </interactant>
    <interactant intactId="EBI-2506727">
        <id>Q9UQK1</id>
        <label>PPP1R3C</label>
    </interactant>
    <organismsDiffer>false</organismsDiffer>
    <experiments>9</experiments>
</comment>
<comment type="interaction">
    <interactant intactId="EBI-352350">
        <id>P62140</id>
    </interactant>
    <interactant intactId="EBI-1024281">
        <id>Q15435</id>
        <label>PPP1R7</label>
    </interactant>
    <organismsDiffer>false</organismsDiffer>
    <experiments>10</experiments>
</comment>
<comment type="interaction">
    <interactant intactId="EBI-352350">
        <id>P62140</id>
    </interactant>
    <interactant intactId="EBI-351275">
        <id>Q96SB3</id>
        <label>PPP1R9B</label>
    </interactant>
    <organismsDiffer>false</organismsDiffer>
    <experiments>2</experiments>
</comment>
<comment type="interaction">
    <interactant intactId="EBI-352350">
        <id>P62140</id>
    </interactant>
    <interactant intactId="EBI-372051">
        <id>Q14684</id>
        <label>RRP1B</label>
    </interactant>
    <organismsDiffer>false</organismsDiffer>
    <experiments>3</experiments>
</comment>
<comment type="interaction">
    <interactant intactId="EBI-352350">
        <id>P62140</id>
    </interactant>
    <interactant intactId="EBI-747035">
        <id>Q9H788</id>
        <label>SH2D4A</label>
    </interactant>
    <organismsDiffer>false</organismsDiffer>
    <experiments>20</experiments>
</comment>
<comment type="interaction">
    <interactant intactId="EBI-352350">
        <id>P62140</id>
    </interactant>
    <interactant intactId="EBI-11995806">
        <id>Q9H0A9-2</id>
        <label>SPATC1L</label>
    </interactant>
    <organismsDiffer>false</organismsDiffer>
    <experiments>3</experiments>
</comment>
<comment type="interaction">
    <interactant intactId="EBI-352350">
        <id>P62140</id>
    </interactant>
    <interactant intactId="EBI-5235340">
        <id>Q7Z699</id>
        <label>SPRED1</label>
    </interactant>
    <organismsDiffer>false</organismsDiffer>
    <experiments>3</experiments>
</comment>
<comment type="interaction">
    <interactant intactId="EBI-352350">
        <id>P62140</id>
    </interactant>
    <interactant intactId="EBI-11952721">
        <id>Q05BL1</id>
        <label>TP53BP2</label>
    </interactant>
    <organismsDiffer>false</organismsDiffer>
    <experiments>3</experiments>
</comment>
<comment type="interaction">
    <interactant intactId="EBI-352350">
        <id>P62140</id>
    </interactant>
    <interactant intactId="EBI-10175039">
        <id>Q13625-3</id>
        <label>TP53BP2</label>
    </interactant>
    <organismsDiffer>false</organismsDiffer>
    <experiments>3</experiments>
</comment>
<comment type="interaction">
    <interactant intactId="EBI-352350">
        <id>P62140</id>
    </interactant>
    <interactant intactId="EBI-79859">
        <id>O08785</id>
        <label>Clock</label>
    </interactant>
    <organismsDiffer>true</organismsDiffer>
    <experiments>2</experiments>
</comment>
<comment type="interaction">
    <interactant intactId="EBI-352350">
        <id>P62140</id>
    </interactant>
    <interactant intactId="EBI-14033469">
        <id>Q76TK5</id>
        <label>ORF23</label>
    </interactant>
    <organismsDiffer>true</organismsDiffer>
    <experiments>2</experiments>
</comment>
<comment type="subcellular location">
    <subcellularLocation>
        <location evidence="6">Cytoplasm</location>
    </subcellularLocation>
    <subcellularLocation>
        <location evidence="6">Nucleus</location>
    </subcellularLocation>
    <subcellularLocation>
        <location evidence="6">Nucleus</location>
        <location evidence="6">Nucleoplasm</location>
    </subcellularLocation>
    <subcellularLocation>
        <location evidence="6 15">Nucleus</location>
        <location evidence="6 15">Nucleolus</location>
    </subcellularLocation>
    <text evidence="6">Highly mobile in cells and can be relocalized through interaction with targeting subunits. In the presence of PPP1R8 relocalizes from the nucleus to nuclear speckles.</text>
</comment>
<comment type="induction">
    <text evidence="17">Up-regulated in synovial fluid mononuclear cells and peripheral blood mononuclear cells from patients with rheumatoid arthritis.</text>
</comment>
<comment type="disease" evidence="19 20 21 22 24">
    <disease id="DI-05011">
        <name>Noonan syndrome-like disorder with loose anagen hair 2</name>
        <acronym>NSLH2</acronym>
        <description>A syndrome characterized by Noonan dysmorphic features such as macrocephaly, high forehead, hypertelorism, palpebral ptosis, low-set and posteriorly rotated ears, short and webbed neck, pectus anomalies, in association with pluckable, sparse, thin and slow-growing hair.</description>
        <dbReference type="MIM" id="617506"/>
    </disease>
    <text>The disease is caused by variants affecting the gene represented in this entry.</text>
</comment>
<comment type="similarity">
    <text evidence="28">Belongs to the PPP phosphatase family. PP-1 subfamily.</text>
</comment>
<comment type="caution">
    <text evidence="11 18">Was originally thought to be part of the MLL5-L complex, at least composed of KMT2E, STK38, PPP1CA, PPP1CB, PPP1CC, HCFC1, ACTB and OGT (PubMed:19377461). However, the corresponding article has been retracted (PubMed:24336203).</text>
</comment>
<comment type="online information" name="Protein Spotlight">
    <link uri="https://www.proteinspotlight.org/back_issues/032"/>
    <text>The things we forget - Issue 32 of March 2003</text>
</comment>
<accession>P62140</accession>
<accession>B2R5V4</accession>
<accession>D6W565</accession>
<accession>P37140</accession>
<accession>Q5U087</accession>
<accession>Q6FG45</accession>
<gene>
    <name type="primary">PPP1CB</name>
</gene>
<name>PP1B_HUMAN</name>
<reference key="1">
    <citation type="journal article" date="1994" name="Biochim. Biophys. Acta">
        <title>Three genes for protein phosphatase 1 map to different human chromosomes: sequence, expression and gene localisation of protein serine/threonine phosphatase 1 beta (PPP1CB).</title>
        <authorList>
            <person name="Barker H.M."/>
            <person name="Brewis N.D."/>
            <person name="Street A.J."/>
            <person name="Spurr N.K."/>
            <person name="Cohen P.T.W."/>
        </authorList>
    </citation>
    <scope>NUCLEOTIDE SEQUENCE [MRNA]</scope>
</reference>
<reference key="2">
    <citation type="journal article" date="1995" name="Diabetologia">
        <title>Molecular and linkage analysis of type-1 protein phosphatase catalytic beta-subunit gene: lack of evidence for its major role in insulin resistance in Pima Indians.</title>
        <authorList>
            <person name="Prochazka M."/>
            <person name="Mochizuki H."/>
            <person name="Baier L.J."/>
            <person name="Cohen P.T.W."/>
            <person name="Bogardus C."/>
        </authorList>
    </citation>
    <scope>NUCLEOTIDE SEQUENCE [GENOMIC DNA]</scope>
</reference>
<reference key="3">
    <citation type="journal article" date="2000" name="J. Cell. Biochem.">
        <title>Characterization of the protein phosphatase 1 catalytic subunit in endothelium: involvement in contractile responses.</title>
        <authorList>
            <person name="Verin A.D."/>
            <person name="Csortos C."/>
            <person name="Durbin S.D."/>
            <person name="Aydanyan A."/>
            <person name="Wang P."/>
            <person name="Patterson C.E."/>
            <person name="Garcia J.G."/>
        </authorList>
    </citation>
    <scope>NUCLEOTIDE SEQUENCE [MRNA]</scope>
    <source>
        <tissue>Umbilical vein</tissue>
    </source>
</reference>
<reference key="4">
    <citation type="submission" date="2004-06" db="EMBL/GenBank/DDBJ databases">
        <title>Cloning of human full open reading frames in Gateway(TM) system entry vector (pDONR201).</title>
        <authorList>
            <person name="Halleck A."/>
            <person name="Ebert L."/>
            <person name="Mkoundinya M."/>
            <person name="Schick M."/>
            <person name="Eisenstein S."/>
            <person name="Neubert P."/>
            <person name="Kstrang K."/>
            <person name="Schatten R."/>
            <person name="Shen B."/>
            <person name="Henze S."/>
            <person name="Mar W."/>
            <person name="Korn B."/>
            <person name="Zuo D."/>
            <person name="Hu Y."/>
            <person name="LaBaer J."/>
        </authorList>
    </citation>
    <scope>NUCLEOTIDE SEQUENCE [LARGE SCALE MRNA]</scope>
</reference>
<reference key="5">
    <citation type="submission" date="2004-10" db="EMBL/GenBank/DDBJ databases">
        <title>Cloning of human full-length CDSs in BD Creator(TM) system donor vector.</title>
        <authorList>
            <person name="Kalnine N."/>
            <person name="Chen X."/>
            <person name="Rolfs A."/>
            <person name="Halleck A."/>
            <person name="Hines L."/>
            <person name="Eisenstein S."/>
            <person name="Koundinya M."/>
            <person name="Raphael J."/>
            <person name="Moreira D."/>
            <person name="Kelley T."/>
            <person name="LaBaer J."/>
            <person name="Lin Y."/>
            <person name="Phelan M."/>
            <person name="Farmer A."/>
        </authorList>
    </citation>
    <scope>NUCLEOTIDE SEQUENCE [LARGE SCALE MRNA]</scope>
</reference>
<reference key="6">
    <citation type="journal article" date="2004" name="Nat. Genet.">
        <title>Complete sequencing and characterization of 21,243 full-length human cDNAs.</title>
        <authorList>
            <person name="Ota T."/>
            <person name="Suzuki Y."/>
            <person name="Nishikawa T."/>
            <person name="Otsuki T."/>
            <person name="Sugiyama T."/>
            <person name="Irie R."/>
            <person name="Wakamatsu A."/>
            <person name="Hayashi K."/>
            <person name="Sato H."/>
            <person name="Nagai K."/>
            <person name="Kimura K."/>
            <person name="Makita H."/>
            <person name="Sekine M."/>
            <person name="Obayashi M."/>
            <person name="Nishi T."/>
            <person name="Shibahara T."/>
            <person name="Tanaka T."/>
            <person name="Ishii S."/>
            <person name="Yamamoto J."/>
            <person name="Saito K."/>
            <person name="Kawai Y."/>
            <person name="Isono Y."/>
            <person name="Nakamura Y."/>
            <person name="Nagahari K."/>
            <person name="Murakami K."/>
            <person name="Yasuda T."/>
            <person name="Iwayanagi T."/>
            <person name="Wagatsuma M."/>
            <person name="Shiratori A."/>
            <person name="Sudo H."/>
            <person name="Hosoiri T."/>
            <person name="Kaku Y."/>
            <person name="Kodaira H."/>
            <person name="Kondo H."/>
            <person name="Sugawara M."/>
            <person name="Takahashi M."/>
            <person name="Kanda K."/>
            <person name="Yokoi T."/>
            <person name="Furuya T."/>
            <person name="Kikkawa E."/>
            <person name="Omura Y."/>
            <person name="Abe K."/>
            <person name="Kamihara K."/>
            <person name="Katsuta N."/>
            <person name="Sato K."/>
            <person name="Tanikawa M."/>
            <person name="Yamazaki M."/>
            <person name="Ninomiya K."/>
            <person name="Ishibashi T."/>
            <person name="Yamashita H."/>
            <person name="Murakawa K."/>
            <person name="Fujimori K."/>
            <person name="Tanai H."/>
            <person name="Kimata M."/>
            <person name="Watanabe M."/>
            <person name="Hiraoka S."/>
            <person name="Chiba Y."/>
            <person name="Ishida S."/>
            <person name="Ono Y."/>
            <person name="Takiguchi S."/>
            <person name="Watanabe S."/>
            <person name="Yosida M."/>
            <person name="Hotuta T."/>
            <person name="Kusano J."/>
            <person name="Kanehori K."/>
            <person name="Takahashi-Fujii A."/>
            <person name="Hara H."/>
            <person name="Tanase T.-O."/>
            <person name="Nomura Y."/>
            <person name="Togiya S."/>
            <person name="Komai F."/>
            <person name="Hara R."/>
            <person name="Takeuchi K."/>
            <person name="Arita M."/>
            <person name="Imose N."/>
            <person name="Musashino K."/>
            <person name="Yuuki H."/>
            <person name="Oshima A."/>
            <person name="Sasaki N."/>
            <person name="Aotsuka S."/>
            <person name="Yoshikawa Y."/>
            <person name="Matsunawa H."/>
            <person name="Ichihara T."/>
            <person name="Shiohata N."/>
            <person name="Sano S."/>
            <person name="Moriya S."/>
            <person name="Momiyama H."/>
            <person name="Satoh N."/>
            <person name="Takami S."/>
            <person name="Terashima Y."/>
            <person name="Suzuki O."/>
            <person name="Nakagawa S."/>
            <person name="Senoh A."/>
            <person name="Mizoguchi H."/>
            <person name="Goto Y."/>
            <person name="Shimizu F."/>
            <person name="Wakebe H."/>
            <person name="Hishigaki H."/>
            <person name="Watanabe T."/>
            <person name="Sugiyama A."/>
            <person name="Takemoto M."/>
            <person name="Kawakami B."/>
            <person name="Yamazaki M."/>
            <person name="Watanabe K."/>
            <person name="Kumagai A."/>
            <person name="Itakura S."/>
            <person name="Fukuzumi Y."/>
            <person name="Fujimori Y."/>
            <person name="Komiyama M."/>
            <person name="Tashiro H."/>
            <person name="Tanigami A."/>
            <person name="Fujiwara T."/>
            <person name="Ono T."/>
            <person name="Yamada K."/>
            <person name="Fujii Y."/>
            <person name="Ozaki K."/>
            <person name="Hirao M."/>
            <person name="Ohmori Y."/>
            <person name="Kawabata A."/>
            <person name="Hikiji T."/>
            <person name="Kobatake N."/>
            <person name="Inagaki H."/>
            <person name="Ikema Y."/>
            <person name="Okamoto S."/>
            <person name="Okitani R."/>
            <person name="Kawakami T."/>
            <person name="Noguchi S."/>
            <person name="Itoh T."/>
            <person name="Shigeta K."/>
            <person name="Senba T."/>
            <person name="Matsumura K."/>
            <person name="Nakajima Y."/>
            <person name="Mizuno T."/>
            <person name="Morinaga M."/>
            <person name="Sasaki M."/>
            <person name="Togashi T."/>
            <person name="Oyama M."/>
            <person name="Hata H."/>
            <person name="Watanabe M."/>
            <person name="Komatsu T."/>
            <person name="Mizushima-Sugano J."/>
            <person name="Satoh T."/>
            <person name="Shirai Y."/>
            <person name="Takahashi Y."/>
            <person name="Nakagawa K."/>
            <person name="Okumura K."/>
            <person name="Nagase T."/>
            <person name="Nomura N."/>
            <person name="Kikuchi H."/>
            <person name="Masuho Y."/>
            <person name="Yamashita R."/>
            <person name="Nakai K."/>
            <person name="Yada T."/>
            <person name="Nakamura Y."/>
            <person name="Ohara O."/>
            <person name="Isogai T."/>
            <person name="Sugano S."/>
        </authorList>
    </citation>
    <scope>NUCLEOTIDE SEQUENCE [LARGE SCALE MRNA]</scope>
    <source>
        <tissue>Cerebellum</tissue>
    </source>
</reference>
<reference key="7">
    <citation type="journal article" date="2007" name="BMC Genomics">
        <title>The full-ORF clone resource of the German cDNA consortium.</title>
        <authorList>
            <person name="Bechtel S."/>
            <person name="Rosenfelder H."/>
            <person name="Duda A."/>
            <person name="Schmidt C.P."/>
            <person name="Ernst U."/>
            <person name="Wellenreuther R."/>
            <person name="Mehrle A."/>
            <person name="Schuster C."/>
            <person name="Bahr A."/>
            <person name="Bloecker H."/>
            <person name="Heubner D."/>
            <person name="Hoerlein A."/>
            <person name="Michel G."/>
            <person name="Wedler H."/>
            <person name="Koehrer K."/>
            <person name="Ottenwaelder B."/>
            <person name="Poustka A."/>
            <person name="Wiemann S."/>
            <person name="Schupp I."/>
        </authorList>
    </citation>
    <scope>NUCLEOTIDE SEQUENCE [LARGE SCALE MRNA]</scope>
    <source>
        <tissue>Endometrium</tissue>
    </source>
</reference>
<reference key="8">
    <citation type="journal article" date="2005" name="Nature">
        <title>Generation and annotation of the DNA sequences of human chromosomes 2 and 4.</title>
        <authorList>
            <person name="Hillier L.W."/>
            <person name="Graves T.A."/>
            <person name="Fulton R.S."/>
            <person name="Fulton L.A."/>
            <person name="Pepin K.H."/>
            <person name="Minx P."/>
            <person name="Wagner-McPherson C."/>
            <person name="Layman D."/>
            <person name="Wylie K."/>
            <person name="Sekhon M."/>
            <person name="Becker M.C."/>
            <person name="Fewell G.A."/>
            <person name="Delehaunty K.D."/>
            <person name="Miner T.L."/>
            <person name="Nash W.E."/>
            <person name="Kremitzki C."/>
            <person name="Oddy L."/>
            <person name="Du H."/>
            <person name="Sun H."/>
            <person name="Bradshaw-Cordum H."/>
            <person name="Ali J."/>
            <person name="Carter J."/>
            <person name="Cordes M."/>
            <person name="Harris A."/>
            <person name="Isak A."/>
            <person name="van Brunt A."/>
            <person name="Nguyen C."/>
            <person name="Du F."/>
            <person name="Courtney L."/>
            <person name="Kalicki J."/>
            <person name="Ozersky P."/>
            <person name="Abbott S."/>
            <person name="Armstrong J."/>
            <person name="Belter E.A."/>
            <person name="Caruso L."/>
            <person name="Cedroni M."/>
            <person name="Cotton M."/>
            <person name="Davidson T."/>
            <person name="Desai A."/>
            <person name="Elliott G."/>
            <person name="Erb T."/>
            <person name="Fronick C."/>
            <person name="Gaige T."/>
            <person name="Haakenson W."/>
            <person name="Haglund K."/>
            <person name="Holmes A."/>
            <person name="Harkins R."/>
            <person name="Kim K."/>
            <person name="Kruchowski S.S."/>
            <person name="Strong C.M."/>
            <person name="Grewal N."/>
            <person name="Goyea E."/>
            <person name="Hou S."/>
            <person name="Levy A."/>
            <person name="Martinka S."/>
            <person name="Mead K."/>
            <person name="McLellan M.D."/>
            <person name="Meyer R."/>
            <person name="Randall-Maher J."/>
            <person name="Tomlinson C."/>
            <person name="Dauphin-Kohlberg S."/>
            <person name="Kozlowicz-Reilly A."/>
            <person name="Shah N."/>
            <person name="Swearengen-Shahid S."/>
            <person name="Snider J."/>
            <person name="Strong J.T."/>
            <person name="Thompson J."/>
            <person name="Yoakum M."/>
            <person name="Leonard S."/>
            <person name="Pearman C."/>
            <person name="Trani L."/>
            <person name="Radionenko M."/>
            <person name="Waligorski J.E."/>
            <person name="Wang C."/>
            <person name="Rock S.M."/>
            <person name="Tin-Wollam A.-M."/>
            <person name="Maupin R."/>
            <person name="Latreille P."/>
            <person name="Wendl M.C."/>
            <person name="Yang S.-P."/>
            <person name="Pohl C."/>
            <person name="Wallis J.W."/>
            <person name="Spieth J."/>
            <person name="Bieri T.A."/>
            <person name="Berkowicz N."/>
            <person name="Nelson J.O."/>
            <person name="Osborne J."/>
            <person name="Ding L."/>
            <person name="Meyer R."/>
            <person name="Sabo A."/>
            <person name="Shotland Y."/>
            <person name="Sinha P."/>
            <person name="Wohldmann P.E."/>
            <person name="Cook L.L."/>
            <person name="Hickenbotham M.T."/>
            <person name="Eldred J."/>
            <person name="Williams D."/>
            <person name="Jones T.A."/>
            <person name="She X."/>
            <person name="Ciccarelli F.D."/>
            <person name="Izaurralde E."/>
            <person name="Taylor J."/>
            <person name="Schmutz J."/>
            <person name="Myers R.M."/>
            <person name="Cox D.R."/>
            <person name="Huang X."/>
            <person name="McPherson J.D."/>
            <person name="Mardis E.R."/>
            <person name="Clifton S.W."/>
            <person name="Warren W.C."/>
            <person name="Chinwalla A.T."/>
            <person name="Eddy S.R."/>
            <person name="Marra M.A."/>
            <person name="Ovcharenko I."/>
            <person name="Furey T.S."/>
            <person name="Miller W."/>
            <person name="Eichler E.E."/>
            <person name="Bork P."/>
            <person name="Suyama M."/>
            <person name="Torrents D."/>
            <person name="Waterston R.H."/>
            <person name="Wilson R.K."/>
        </authorList>
    </citation>
    <scope>NUCLEOTIDE SEQUENCE [LARGE SCALE GENOMIC DNA]</scope>
</reference>
<reference key="9">
    <citation type="submission" date="2005-09" db="EMBL/GenBank/DDBJ databases">
        <authorList>
            <person name="Mural R.J."/>
            <person name="Istrail S."/>
            <person name="Sutton G.G."/>
            <person name="Florea L."/>
            <person name="Halpern A.L."/>
            <person name="Mobarry C.M."/>
            <person name="Lippert R."/>
            <person name="Walenz B."/>
            <person name="Shatkay H."/>
            <person name="Dew I."/>
            <person name="Miller J.R."/>
            <person name="Flanigan M.J."/>
            <person name="Edwards N.J."/>
            <person name="Bolanos R."/>
            <person name="Fasulo D."/>
            <person name="Halldorsson B.V."/>
            <person name="Hannenhalli S."/>
            <person name="Turner R."/>
            <person name="Yooseph S."/>
            <person name="Lu F."/>
            <person name="Nusskern D.R."/>
            <person name="Shue B.C."/>
            <person name="Zheng X.H."/>
            <person name="Zhong F."/>
            <person name="Delcher A.L."/>
            <person name="Huson D.H."/>
            <person name="Kravitz S.A."/>
            <person name="Mouchard L."/>
            <person name="Reinert K."/>
            <person name="Remington K.A."/>
            <person name="Clark A.G."/>
            <person name="Waterman M.S."/>
            <person name="Eichler E.E."/>
            <person name="Adams M.D."/>
            <person name="Hunkapiller M.W."/>
            <person name="Myers E.W."/>
            <person name="Venter J.C."/>
        </authorList>
    </citation>
    <scope>NUCLEOTIDE SEQUENCE [LARGE SCALE GENOMIC DNA]</scope>
</reference>
<reference key="10">
    <citation type="journal article" date="2004" name="Genome Res.">
        <title>The status, quality, and expansion of the NIH full-length cDNA project: the Mammalian Gene Collection (MGC).</title>
        <authorList>
            <consortium name="The MGC Project Team"/>
        </authorList>
    </citation>
    <scope>NUCLEOTIDE SEQUENCE [LARGE SCALE MRNA]</scope>
    <source>
        <tissue>Uterus</tissue>
    </source>
</reference>
<reference key="11">
    <citation type="journal article" date="2003" name="Nat. Biotechnol.">
        <title>Exploring proteomes and analyzing protein processing by mass spectrometric identification of sorted N-terminal peptides.</title>
        <authorList>
            <person name="Gevaert K."/>
            <person name="Goethals M."/>
            <person name="Martens L."/>
            <person name="Van Damme J."/>
            <person name="Staes A."/>
            <person name="Thomas G.R."/>
            <person name="Vandekerckhove J."/>
        </authorList>
    </citation>
    <scope>PROTEIN SEQUENCE OF 2-14</scope>
    <scope>ACETYLATION AT ALA-2</scope>
    <source>
        <tissue>Platelet</tissue>
    </source>
</reference>
<reference key="12">
    <citation type="journal article" date="2001" name="J. Biol. Chem.">
        <title>Phosphorylation of a novel myosin binding subunit of protein phosphatase 1 reveals a conserved mechanism in the regulation of actin cytoskeleton.</title>
        <authorList>
            <person name="Tan I."/>
            <person name="Ng C.H."/>
            <person name="Lim L."/>
            <person name="Leung T."/>
        </authorList>
    </citation>
    <scope>INTERACTION WITH PPP1R12C</scope>
</reference>
<reference key="13">
    <citation type="journal article" date="2001" name="J. Cell Sci.">
        <title>Dynamic targeting of protein phosphatase 1 within the nuclei of living mammalian cells.</title>
        <authorList>
            <person name="Trinkle-Mulcahy L."/>
            <person name="Sleeman J.E."/>
            <person name="Lamond A.I."/>
        </authorList>
    </citation>
    <scope>SUBCELLULAR LOCATION</scope>
</reference>
<reference key="14">
    <citation type="journal article" date="2001" name="Mol. Cell. Biol.">
        <title>Growth arrest and DNA damage-inducible protein GADD34 assembles a novel signaling complex containing protein phosphatase 1 and inhibitor 1.</title>
        <authorList>
            <person name="Connor J.H."/>
            <person name="Weiser D.C."/>
            <person name="Li S."/>
            <person name="Hallenbeck J.M."/>
            <person name="Shenolikar S."/>
        </authorList>
    </citation>
    <scope>INTERACTION WITH PPP1R15A</scope>
</reference>
<reference key="15">
    <citation type="journal article" date="2002" name="J. Biol. Chem.">
        <title>Binding of the concave surface of the Sds22 superhelix to the alpha 4/alpha 5/alpha 6-triangle of protein phosphatase-1.</title>
        <authorList>
            <person name="Ceulemans H."/>
            <person name="Vulsteke V."/>
            <person name="De Maeyer M."/>
            <person name="Tatchell K."/>
            <person name="Stalmans W."/>
            <person name="Bollen M."/>
        </authorList>
    </citation>
    <scope>INTERACTION WITH PPP1R7</scope>
</reference>
<reference key="16">
    <citation type="journal article" date="2005" name="Science">
        <title>A selective inhibitor of eIF2alpha dephosphorylation protects cells from ER stress.</title>
        <authorList>
            <person name="Boyce M."/>
            <person name="Bryant K.F."/>
            <person name="Jousse C."/>
            <person name="Long K."/>
            <person name="Harding H.P."/>
            <person name="Scheuner D."/>
            <person name="Kaufman R.J."/>
            <person name="Ma D."/>
            <person name="Coen D.M."/>
            <person name="Ron D."/>
            <person name="Yuan J."/>
        </authorList>
    </citation>
    <scope>ACTIVITY REGULATION</scope>
</reference>
<reference key="17">
    <citation type="journal article" date="2008" name="Am. J. Physiol.">
        <title>TIMAP is a positive regulator of pulmonary endothelial barrier function.</title>
        <authorList>
            <person name="Csortos C."/>
            <person name="Czikora I."/>
            <person name="Bogatcheva N.V."/>
            <person name="Adyshev D.M."/>
            <person name="Poirier C."/>
            <person name="Olah G."/>
            <person name="Verin A.D."/>
        </authorList>
    </citation>
    <scope>INTERACTION WITH PPP1R16B</scope>
</reference>
<reference key="18">
    <citation type="journal article" date="2008" name="Proc. Natl. Acad. Sci. U.S.A.">
        <title>A quantitative atlas of mitotic phosphorylation.</title>
        <authorList>
            <person name="Dephoure N."/>
            <person name="Zhou C."/>
            <person name="Villen J."/>
            <person name="Beausoleil S.A."/>
            <person name="Bakalarski C.E."/>
            <person name="Elledge S.J."/>
            <person name="Gygi S.P."/>
        </authorList>
    </citation>
    <scope>PHOSPHORYLATION [LARGE SCALE ANALYSIS] AT THR-316</scope>
    <scope>IDENTIFICATION BY MASS SPECTROMETRY [LARGE SCALE ANALYSIS]</scope>
    <source>
        <tissue>Cervix carcinoma</tissue>
    </source>
</reference>
<reference key="19">
    <citation type="journal article" date="2009" name="Nature">
        <title>GlcNAcylation of a histone methyltransferase in retinoic-acid-induced granulopoiesis.</title>
        <authorList>
            <person name="Fujiki R."/>
            <person name="Chikanishi T."/>
            <person name="Hashiba W."/>
            <person name="Ito H."/>
            <person name="Takada I."/>
            <person name="Roeder R.G."/>
            <person name="Kitagawa H."/>
            <person name="Kato S."/>
        </authorList>
    </citation>
    <scope>RETRACTED PAPER</scope>
</reference>
<reference key="20">
    <citation type="journal article" date="2014" name="Nature">
        <title>Retraction: GlcNAcylation of a histone methyltransferase in retinoic-acid-induced granulopoiesis.</title>
        <authorList>
            <person name="Fujiki R."/>
            <person name="Chikanishi T."/>
            <person name="Hashiba W."/>
            <person name="Ito H."/>
            <person name="Takada I."/>
            <person name="Roeder R.G."/>
            <person name="Kitagawa H."/>
            <person name="Kato S."/>
        </authorList>
    </citation>
    <scope>CAUTION</scope>
    <scope>RETRACTION NOTICE OF PUBMED:19377461</scope>
</reference>
<reference key="21">
    <citation type="journal article" date="2011" name="BMC Syst. Biol.">
        <title>Initial characterization of the human central proteome.</title>
        <authorList>
            <person name="Burkard T.R."/>
            <person name="Planyavsky M."/>
            <person name="Kaupe I."/>
            <person name="Breitwieser F.P."/>
            <person name="Buerckstuemmer T."/>
            <person name="Bennett K.L."/>
            <person name="Superti-Furga G."/>
            <person name="Colinge J."/>
        </authorList>
    </citation>
    <scope>IDENTIFICATION BY MASS SPECTROMETRY [LARGE SCALE ANALYSIS]</scope>
</reference>
<reference key="22">
    <citation type="journal article" date="2012" name="Mol. Cell. Proteomics">
        <title>Comparative large-scale characterisation of plant vs. mammal proteins reveals similar and idiosyncratic N-alpha acetylation features.</title>
        <authorList>
            <person name="Bienvenut W.V."/>
            <person name="Sumpton D."/>
            <person name="Martinez A."/>
            <person name="Lilla S."/>
            <person name="Espagne C."/>
            <person name="Meinnel T."/>
            <person name="Giglione C."/>
        </authorList>
    </citation>
    <scope>ACETYLATION [LARGE SCALE ANALYSIS] AT ALA-2</scope>
    <scope>CLEAVAGE OF INITIATOR METHIONINE [LARGE SCALE ANALYSIS]</scope>
    <scope>IDENTIFICATION BY MASS SPECTROMETRY [LARGE SCALE ANALYSIS]</scope>
</reference>
<reference key="23">
    <citation type="journal article" date="2012" name="Proc. Natl. Acad. Sci. U.S.A.">
        <title>N-terminal acetylome analyses and functional insights of the N-terminal acetyltransferase NatB.</title>
        <authorList>
            <person name="Van Damme P."/>
            <person name="Lasa M."/>
            <person name="Polevoda B."/>
            <person name="Gazquez C."/>
            <person name="Elosegui-Artola A."/>
            <person name="Kim D.S."/>
            <person name="De Juan-Pardo E."/>
            <person name="Demeyer K."/>
            <person name="Hole K."/>
            <person name="Larrea E."/>
            <person name="Timmerman E."/>
            <person name="Prieto J."/>
            <person name="Arnesen T."/>
            <person name="Sherman F."/>
            <person name="Gevaert K."/>
            <person name="Aldabe R."/>
        </authorList>
    </citation>
    <scope>ACETYLATION [LARGE SCALE ANALYSIS] AT ALA-2</scope>
    <scope>CLEAVAGE OF INITIATOR METHIONINE [LARGE SCALE ANALYSIS]</scope>
    <scope>IDENTIFICATION BY MASS SPECTROMETRY [LARGE SCALE ANALYSIS]</scope>
</reference>
<reference key="24">
    <citation type="journal article" date="2013" name="J. Proteome Res.">
        <title>Toward a comprehensive characterization of a human cancer cell phosphoproteome.</title>
        <authorList>
            <person name="Zhou H."/>
            <person name="Di Palma S."/>
            <person name="Preisinger C."/>
            <person name="Peng M."/>
            <person name="Polat A.N."/>
            <person name="Heck A.J."/>
            <person name="Mohammed S."/>
        </authorList>
    </citation>
    <scope>PHOSPHORYLATION [LARGE SCALE ANALYSIS] AT THR-316</scope>
    <scope>IDENTIFICATION BY MASS SPECTROMETRY [LARGE SCALE ANALYSIS]</scope>
    <source>
        <tissue>Cervix carcinoma</tissue>
        <tissue>Erythroleukemia</tissue>
    </source>
</reference>
<reference key="25">
    <citation type="journal article" date="2010" name="J. Biol. Chem.">
        <title>Identification and characterization of a novel human PP1 phosphatase complex.</title>
        <authorList>
            <person name="Lee J.H."/>
            <person name="You J."/>
            <person name="Dobrota E."/>
            <person name="Skalnik D.G."/>
        </authorList>
    </citation>
    <scope>IDENTIFICATION IN THE PTW/PP1 PHOSPHATASE COMPLEX</scope>
    <scope>FUNCTION</scope>
    <scope>INTERACTION WITH PPP1R8</scope>
</reference>
<reference key="26">
    <citation type="journal article" date="2010" name="Mol. Biol. Cell">
        <title>RRP1B targets PP1 to mammalian cell nucleoli and is associated with pre-60S ribosomal subunits.</title>
        <authorList>
            <person name="Chamousset D."/>
            <person name="De Wever V."/>
            <person name="Moorhead G.B."/>
            <person name="Chen Y."/>
            <person name="Boisvert F.M."/>
            <person name="Lamond A.I."/>
            <person name="Trinkle-Mulcahy L."/>
        </authorList>
    </citation>
    <scope>INTERACTION WITH RRP1B</scope>
    <scope>SUBCELLULAR LOCATION</scope>
</reference>
<reference key="27">
    <citation type="journal article" date="2010" name="Sci. Signal.">
        <title>New roles for the LKB1-NUAK pathway in controlling myosin phosphatase complexes and cell adhesion.</title>
        <authorList>
            <person name="Zagorska A."/>
            <person name="Deak M."/>
            <person name="Campbell D.G."/>
            <person name="Banerjee S."/>
            <person name="Hirano M."/>
            <person name="Aizawa S."/>
            <person name="Prescott A.R."/>
            <person name="Alessi D.R."/>
        </authorList>
    </citation>
    <scope>INTERACTION WITH NUAK1 AND PPP1R12A</scope>
</reference>
<reference key="28">
    <citation type="journal article" date="2010" name="Sci. Signal.">
        <title>SUMOylation of the transcriptional co-repressor KAP1 is regulated by the serine and threonine phosphatase PP1.</title>
        <authorList>
            <person name="Li X."/>
            <person name="Lin H.H."/>
            <person name="Chen H."/>
            <person name="Xu X."/>
            <person name="Shih H.M."/>
            <person name="Ann D.K."/>
        </authorList>
    </citation>
    <scope>INTERACTION WITH TRIM28</scope>
</reference>
<reference key="29">
    <citation type="journal article" date="2011" name="PLoS ONE">
        <title>Protein phosphatase 1 (PP1) is a post-translational regulator of the mammalian circadian clock.</title>
        <authorList>
            <person name="Schmutz I."/>
            <person name="Wendt S."/>
            <person name="Schnell A."/>
            <person name="Kramer A."/>
            <person name="Mansuy I.M."/>
            <person name="Albrecht U."/>
        </authorList>
    </citation>
    <scope>FUNCTION IN CIRCADIAN CLOCK</scope>
</reference>
<reference key="30">
    <citation type="journal article" date="2013" name="Nat. Med.">
        <title>Phosphorylation of FOXP3 controls regulatory T cell function and is inhibited by TNF-alpha in rheumatoid arthritis.</title>
        <authorList>
            <person name="Nie H."/>
            <person name="Zheng Y."/>
            <person name="Li R."/>
            <person name="Guo T.B."/>
            <person name="He D."/>
            <person name="Fang L."/>
            <person name="Liu X."/>
            <person name="Xiao L."/>
            <person name="Chen X."/>
            <person name="Wan B."/>
            <person name="Chin Y.E."/>
            <person name="Zhang J.Z."/>
        </authorList>
    </citation>
    <scope>FUNCTION</scope>
    <scope>INTERACTION WITH FOXP3</scope>
    <scope>INDUCTION</scope>
</reference>
<reference key="31">
    <citation type="journal article" date="2015" name="Proteomics">
        <title>N-terminome analysis of the human mitochondrial proteome.</title>
        <authorList>
            <person name="Vaca Jacome A.S."/>
            <person name="Rabilloud T."/>
            <person name="Schaeffer-Reiss C."/>
            <person name="Rompais M."/>
            <person name="Ayoub D."/>
            <person name="Lane L."/>
            <person name="Bairoch A."/>
            <person name="Van Dorsselaer A."/>
            <person name="Carapito C."/>
        </authorList>
    </citation>
    <scope>IDENTIFICATION BY MASS SPECTROMETRY [LARGE SCALE ANALYSIS]</scope>
</reference>
<reference key="32">
    <citation type="journal article" date="2016" name="Am. J. Med. Genet. A">
        <title>A novel rasopathy caused by recurrent de novo missense mutations in PPP1CB closely resembles Noonan syndrome with loose anagen hair.</title>
        <authorList>
            <person name="Gripp K.W."/>
            <person name="Aldinger K.A."/>
            <person name="Bennett J.T."/>
            <person name="Baker L."/>
            <person name="Tusi J."/>
            <person name="Powell-Hamilton N."/>
            <person name="Stabley D."/>
            <person name="Sol-Church K."/>
            <person name="Timms A.E."/>
            <person name="Dobyns W.B."/>
        </authorList>
    </citation>
    <scope>INVOLVEMENT IN NSLH2</scope>
    <scope>VARIANTS NSLH2 ARG-49 AND PRO-56</scope>
</reference>
<reference key="33">
    <citation type="journal article" date="2016" name="Hum. Genet.">
        <title>De novo missense variants in PPP1CB are associated with intellectual disability and congenital heart disease.</title>
        <authorList>
            <person name="Ma L."/>
            <person name="Bayram Y."/>
            <person name="McLaughlin H.M."/>
            <person name="Cho M.T."/>
            <person name="Krokosky A."/>
            <person name="Turner C.E."/>
            <person name="Lindstrom K."/>
            <person name="Bupp C.P."/>
            <person name="Mayberry K."/>
            <person name="Mu W."/>
            <person name="Bodurtha J."/>
            <person name="Weinstein V."/>
            <person name="Zadeh N."/>
            <person name="Alcaraz W."/>
            <person name="Powis Z."/>
            <person name="Shao Y."/>
            <person name="Scott D.A."/>
            <person name="Lewis A.M."/>
            <person name="White J.J."/>
            <person name="Jhangiani S.N."/>
            <person name="Gulec E.Y."/>
            <person name="Lalani S.R."/>
            <person name="Lupski J.R."/>
            <person name="Retterer K."/>
            <person name="Schnur R.E."/>
            <person name="Wentzensen I.M."/>
            <person name="Bale S."/>
            <person name="Chung W.K."/>
        </authorList>
    </citation>
    <scope>INVOLVEMENT IN NSLH2</scope>
    <scope>VARIANTS NSLH2 ARG-49; ALA-183; VAL-183; TYR-252 AND LYS-274</scope>
</reference>
<reference key="34">
    <citation type="journal article" date="2017" name="Am. J. Med. Genet. A">
        <title>Further evidence that variants in PPP1CB cause a rasopathy similar to Noonan syndrome with loose anagen hair.</title>
        <authorList>
            <person name="Zambrano R.M."/>
            <person name="Marble M."/>
            <person name="Chalew S.A."/>
            <person name="Lilje C."/>
            <person name="Vargas A."/>
            <person name="Lacassie Y."/>
        </authorList>
    </citation>
    <scope>INVOLVEMENT IN NSLH2</scope>
    <scope>VARIANT NSLH2 ARG-49</scope>
</reference>
<reference key="35">
    <citation type="journal article" date="2017" name="Am. J. Med. Genet. A">
        <title>The recurrent PPP1CB mutation p.Pro49Arg in an additional Noonan-like syndrome individual: Broadening the clinical phenotype.</title>
        <authorList>
            <person name="Bertola D."/>
            <person name="Yamamoto G."/>
            <person name="Buscarilli M."/>
            <person name="Jorge A."/>
            <person name="Passos-Bueno M.R."/>
            <person name="Kim C."/>
        </authorList>
    </citation>
    <scope>INVOLVEMENT IN NSLH2</scope>
    <scope>VARIANT NSLH2 ARG-49</scope>
</reference>
<reference key="36">
    <citation type="journal article" date="2017" name="J. Cell. Mol. Med.">
        <title>PAI1: a novel PP1-interacting protein that mediates human plasma's anti-apoptotic effect in endothelial cells.</title>
        <authorList>
            <person name="Yao H."/>
            <person name="He G."/>
            <person name="Chen C."/>
            <person name="Yan S."/>
            <person name="Lu L."/>
            <person name="Song L."/>
            <person name="Vijayan K.V."/>
            <person name="Li Q."/>
            <person name="Xiong L."/>
            <person name="Miao X."/>
            <person name="Deng X."/>
        </authorList>
    </citation>
    <scope>INTERACTION WITH SERPINE1</scope>
</reference>
<reference key="37">
    <citation type="journal article" date="2019" name="Hum. Genet.">
        <title>Delineation of LZTR1 mutation-positive patients with Noonan syndrome and identification of LZTR1 binding to RAF1-PPP1CB complexes.</title>
        <authorList>
            <person name="Umeki I."/>
            <person name="Niihori T."/>
            <person name="Abe T."/>
            <person name="Kanno S.I."/>
            <person name="Okamoto N."/>
            <person name="Mizuno S."/>
            <person name="Kurosawa K."/>
            <person name="Nagasaki K."/>
            <person name="Yoshida M."/>
            <person name="Ohashi H."/>
            <person name="Inoue S.I."/>
            <person name="Matsubara Y."/>
            <person name="Fujiwara I."/>
            <person name="Kure S."/>
            <person name="Aoki Y."/>
        </authorList>
    </citation>
    <scope>VARIANT NSLH2 ARG-49</scope>
    <scope>INTERACTION WITH LZTR1</scope>
</reference>
<reference key="38">
    <citation type="journal article" date="2022" name="Nat. Struct. Mol. Biol.">
        <title>Structure of the SHOC2-MRAS-PP1c complex provides insights into RAF activation and Noonan syndrome.</title>
        <authorList>
            <person name="Bonsor D.A."/>
            <person name="Alexander P."/>
            <person name="Snead K."/>
            <person name="Hartig N."/>
            <person name="Drew M."/>
            <person name="Messing S."/>
            <person name="Finci L.I."/>
            <person name="Nissley D.V."/>
            <person name="McCormick F."/>
            <person name="Esposito D."/>
            <person name="Rodriguez-Viciana P."/>
            <person name="Stephen A.G."/>
            <person name="Simanshu D.K."/>
        </authorList>
    </citation>
    <scope>FUNCTION</scope>
    <scope>CATALYTIC ACTIVITY</scope>
    <scope>INTERACTION WITH SHOC2; MRAS; KRAS; NRAS AND HRAS</scope>
</reference>
<reference key="39">
    <citation type="journal article" date="2022" name="Nature">
        <title>Structural basis for SHOC2 modulation of RAS signalling.</title>
        <authorList>
            <person name="Liau N.P.D."/>
            <person name="Johnson M.C."/>
            <person name="Izadi S."/>
            <person name="Gerosa L."/>
            <person name="Hammel M."/>
            <person name="Bruning J.M."/>
            <person name="Wendorff T.J."/>
            <person name="Phung W."/>
            <person name="Hymowitz S.G."/>
            <person name="Sudhamsu J."/>
        </authorList>
    </citation>
    <scope>FUNCTION</scope>
    <scope>CATALYTIC ACTIVITY</scope>
    <scope>INTERACTION WITH SHOC2; MRAS; KRAS; NRAS AND HRAS</scope>
</reference>
<reference key="40">
    <citation type="journal article" date="2022" name="Nature">
        <title>Structure-function analysis of the SHOC2-MRAS-PP1c holophosphatase complex.</title>
        <authorList>
            <person name="Kwon J.J."/>
            <person name="Hajian B."/>
            <person name="Bian Y."/>
            <person name="Young L.C."/>
            <person name="Amor A.J."/>
            <person name="Fuller J.R."/>
            <person name="Fraley C.V."/>
            <person name="Sykes A.M."/>
            <person name="So J."/>
            <person name="Pan J."/>
            <person name="Baker L."/>
            <person name="Lee S.J."/>
            <person name="Wheeler D.B."/>
            <person name="Mayhew D.L."/>
            <person name="Persky N.S."/>
            <person name="Yang X."/>
            <person name="Root D.E."/>
            <person name="Barsotti A.M."/>
            <person name="Stamford A.W."/>
            <person name="Perry C.K."/>
            <person name="Burgin A."/>
            <person name="McCormick F."/>
            <person name="Lemke C.T."/>
            <person name="Hahn W.C."/>
            <person name="Aguirre A.J."/>
        </authorList>
    </citation>
    <scope>FUNCTION</scope>
    <scope>CATALYTIC ACTIVITY</scope>
    <scope>INTERACTION WITH SHOC2; MRAS; KRAS; NRAS AND HRAS</scope>
</reference>
<evidence type="ECO:0000250" key="1"/>
<evidence type="ECO:0000250" key="2">
    <source>
        <dbReference type="UniProtKB" id="P62141"/>
    </source>
</evidence>
<evidence type="ECO:0000256" key="3">
    <source>
        <dbReference type="SAM" id="MobiDB-lite"/>
    </source>
</evidence>
<evidence type="ECO:0000269" key="4">
    <source>
    </source>
</evidence>
<evidence type="ECO:0000269" key="5">
    <source>
    </source>
</evidence>
<evidence type="ECO:0000269" key="6">
    <source>
    </source>
</evidence>
<evidence type="ECO:0000269" key="7">
    <source>
    </source>
</evidence>
<evidence type="ECO:0000269" key="8">
    <source>
    </source>
</evidence>
<evidence type="ECO:0000269" key="9">
    <source>
    </source>
</evidence>
<evidence type="ECO:0000269" key="10">
    <source>
    </source>
</evidence>
<evidence type="ECO:0000269" key="11">
    <source>
    </source>
</evidence>
<evidence type="ECO:0000269" key="12">
    <source>
    </source>
</evidence>
<evidence type="ECO:0000269" key="13">
    <source>
    </source>
</evidence>
<evidence type="ECO:0000269" key="14">
    <source>
    </source>
</evidence>
<evidence type="ECO:0000269" key="15">
    <source>
    </source>
</evidence>
<evidence type="ECO:0000269" key="16">
    <source>
    </source>
</evidence>
<evidence type="ECO:0000269" key="17">
    <source>
    </source>
</evidence>
<evidence type="ECO:0000269" key="18">
    <source>
    </source>
</evidence>
<evidence type="ECO:0000269" key="19">
    <source>
    </source>
</evidence>
<evidence type="ECO:0000269" key="20">
    <source>
    </source>
</evidence>
<evidence type="ECO:0000269" key="21">
    <source>
    </source>
</evidence>
<evidence type="ECO:0000269" key="22">
    <source>
    </source>
</evidence>
<evidence type="ECO:0000269" key="23">
    <source>
    </source>
</evidence>
<evidence type="ECO:0000269" key="24">
    <source>
    </source>
</evidence>
<evidence type="ECO:0000269" key="25">
    <source>
    </source>
</evidence>
<evidence type="ECO:0000269" key="26">
    <source>
    </source>
</evidence>
<evidence type="ECO:0000269" key="27">
    <source>
    </source>
</evidence>
<evidence type="ECO:0000305" key="28"/>
<evidence type="ECO:0007744" key="29">
    <source>
    </source>
</evidence>
<evidence type="ECO:0007744" key="30">
    <source>
    </source>
</evidence>
<evidence type="ECO:0007744" key="31">
    <source>
    </source>
</evidence>
<evidence type="ECO:0007744" key="32">
    <source>
    </source>
</evidence>
<proteinExistence type="evidence at protein level"/>
<dbReference type="EC" id="3.1.3.16" evidence="25 26 27"/>
<dbReference type="EC" id="3.1.3.53"/>
<dbReference type="EMBL" id="X80910">
    <property type="protein sequence ID" value="CAA56870.1"/>
    <property type="molecule type" value="mRNA"/>
</dbReference>
<dbReference type="EMBL" id="U11005">
    <property type="protein sequence ID" value="AAA85093.1"/>
    <property type="molecule type" value="Genomic_DNA"/>
</dbReference>
<dbReference type="EMBL" id="U10998">
    <property type="protein sequence ID" value="AAA85093.1"/>
    <property type="status" value="JOINED"/>
    <property type="molecule type" value="Genomic_DNA"/>
</dbReference>
<dbReference type="EMBL" id="U10999">
    <property type="protein sequence ID" value="AAA85093.1"/>
    <property type="status" value="JOINED"/>
    <property type="molecule type" value="Genomic_DNA"/>
</dbReference>
<dbReference type="EMBL" id="U11000">
    <property type="protein sequence ID" value="AAA85093.1"/>
    <property type="status" value="JOINED"/>
    <property type="molecule type" value="Genomic_DNA"/>
</dbReference>
<dbReference type="EMBL" id="U11001">
    <property type="protein sequence ID" value="AAA85093.1"/>
    <property type="status" value="JOINED"/>
    <property type="molecule type" value="Genomic_DNA"/>
</dbReference>
<dbReference type="EMBL" id="U11002">
    <property type="protein sequence ID" value="AAA85093.1"/>
    <property type="status" value="JOINED"/>
    <property type="molecule type" value="Genomic_DNA"/>
</dbReference>
<dbReference type="EMBL" id="U11003">
    <property type="protein sequence ID" value="AAA85093.1"/>
    <property type="status" value="JOINED"/>
    <property type="molecule type" value="Genomic_DNA"/>
</dbReference>
<dbReference type="EMBL" id="U11004">
    <property type="protein sequence ID" value="AAA85093.1"/>
    <property type="status" value="JOINED"/>
    <property type="molecule type" value="Genomic_DNA"/>
</dbReference>
<dbReference type="EMBL" id="AF092905">
    <property type="protein sequence ID" value="AAF01137.1"/>
    <property type="molecule type" value="mRNA"/>
</dbReference>
<dbReference type="EMBL" id="CR542263">
    <property type="protein sequence ID" value="CAG47059.1"/>
    <property type="molecule type" value="mRNA"/>
</dbReference>
<dbReference type="EMBL" id="CR542285">
    <property type="protein sequence ID" value="CAG47080.1"/>
    <property type="molecule type" value="mRNA"/>
</dbReference>
<dbReference type="EMBL" id="BT019744">
    <property type="protein sequence ID" value="AAV38549.1"/>
    <property type="molecule type" value="mRNA"/>
</dbReference>
<dbReference type="EMBL" id="AK312329">
    <property type="protein sequence ID" value="BAG35251.1"/>
    <property type="molecule type" value="mRNA"/>
</dbReference>
<dbReference type="EMBL" id="BX647970">
    <property type="status" value="NOT_ANNOTATED_CDS"/>
    <property type="molecule type" value="mRNA"/>
</dbReference>
<dbReference type="EMBL" id="AC097724">
    <property type="protein sequence ID" value="AAY24124.1"/>
    <property type="molecule type" value="Genomic_DNA"/>
</dbReference>
<dbReference type="EMBL" id="CH471053">
    <property type="protein sequence ID" value="EAX00527.1"/>
    <property type="molecule type" value="Genomic_DNA"/>
</dbReference>
<dbReference type="EMBL" id="CH471053">
    <property type="protein sequence ID" value="EAX00528.1"/>
    <property type="molecule type" value="Genomic_DNA"/>
</dbReference>
<dbReference type="EMBL" id="CH471053">
    <property type="protein sequence ID" value="EAX00529.1"/>
    <property type="molecule type" value="Genomic_DNA"/>
</dbReference>
<dbReference type="EMBL" id="CH471053">
    <property type="protein sequence ID" value="EAX00530.1"/>
    <property type="molecule type" value="Genomic_DNA"/>
</dbReference>
<dbReference type="EMBL" id="BC002697">
    <property type="protein sequence ID" value="AAH02697.1"/>
    <property type="molecule type" value="mRNA"/>
</dbReference>
<dbReference type="EMBL" id="BC012045">
    <property type="protein sequence ID" value="AAH12045.1"/>
    <property type="molecule type" value="mRNA"/>
</dbReference>
<dbReference type="CCDS" id="CCDS33169.1"/>
<dbReference type="PIR" id="S41052">
    <property type="entry name" value="S41052"/>
</dbReference>
<dbReference type="RefSeq" id="NP_002700.1">
    <property type="nucleotide sequence ID" value="NM_002709.3"/>
</dbReference>
<dbReference type="RefSeq" id="NP_996759.1">
    <property type="nucleotide sequence ID" value="NM_206876.2"/>
</dbReference>
<dbReference type="SMR" id="P62140"/>
<dbReference type="BioGRID" id="111494">
    <property type="interactions" value="484"/>
</dbReference>
<dbReference type="ComplexPortal" id="CPX-25719">
    <property type="entry name" value="SHOC2-MRAS-PPP1CB complex"/>
</dbReference>
<dbReference type="CORUM" id="P62140"/>
<dbReference type="DIP" id="DIP-33220N"/>
<dbReference type="FunCoup" id="P62140">
    <property type="interactions" value="3414"/>
</dbReference>
<dbReference type="IntAct" id="P62140">
    <property type="interactions" value="286"/>
</dbReference>
<dbReference type="MINT" id="P62140"/>
<dbReference type="STRING" id="9606.ENSP00000378769"/>
<dbReference type="ChEMBL" id="CHEMBL4546"/>
<dbReference type="DEPOD" id="PPP1CB"/>
<dbReference type="GlyGen" id="P62140">
    <property type="glycosylation" value="2 sites, 1 O-linked glycan (1 site)"/>
</dbReference>
<dbReference type="iPTMnet" id="P62140"/>
<dbReference type="MetOSite" id="P62140"/>
<dbReference type="PhosphoSitePlus" id="P62140"/>
<dbReference type="SwissPalm" id="P62140"/>
<dbReference type="BioMuta" id="PPP1CB"/>
<dbReference type="DMDM" id="49065814"/>
<dbReference type="OGP" id="P37140"/>
<dbReference type="jPOST" id="P62140"/>
<dbReference type="MassIVE" id="P62140"/>
<dbReference type="PaxDb" id="9606-ENSP00000378769"/>
<dbReference type="PeptideAtlas" id="P62140"/>
<dbReference type="PRIDE" id="P62140"/>
<dbReference type="ProteomicsDB" id="57367"/>
<dbReference type="Pumba" id="P62140"/>
<dbReference type="TopDownProteomics" id="P62140"/>
<dbReference type="Antibodypedia" id="28856">
    <property type="antibodies" value="514 antibodies from 34 providers"/>
</dbReference>
<dbReference type="DNASU" id="5500"/>
<dbReference type="Ensembl" id="ENST00000296122.10">
    <property type="protein sequence ID" value="ENSP00000296122.6"/>
    <property type="gene ID" value="ENSG00000213639.11"/>
</dbReference>
<dbReference type="Ensembl" id="ENST00000395366.3">
    <property type="protein sequence ID" value="ENSP00000378769.2"/>
    <property type="gene ID" value="ENSG00000213639.11"/>
</dbReference>
<dbReference type="Ensembl" id="ENST00000420282.6">
    <property type="protein sequence ID" value="ENSP00000398839.2"/>
    <property type="gene ID" value="ENSG00000213639.11"/>
</dbReference>
<dbReference type="Ensembl" id="ENST00000441461.6">
    <property type="protein sequence ID" value="ENSP00000414918.2"/>
    <property type="gene ID" value="ENSG00000213639.11"/>
</dbReference>
<dbReference type="Ensembl" id="ENST00000703173.1">
    <property type="protein sequence ID" value="ENSP00000515219.1"/>
    <property type="gene ID" value="ENSG00000213639.11"/>
</dbReference>
<dbReference type="GeneID" id="5500"/>
<dbReference type="KEGG" id="hsa:5500"/>
<dbReference type="MANE-Select" id="ENST00000395366.3">
    <property type="protein sequence ID" value="ENSP00000378769.2"/>
    <property type="RefSeq nucleotide sequence ID" value="NM_002709.3"/>
    <property type="RefSeq protein sequence ID" value="NP_002700.1"/>
</dbReference>
<dbReference type="AGR" id="HGNC:9282"/>
<dbReference type="CTD" id="5500"/>
<dbReference type="DisGeNET" id="5500"/>
<dbReference type="GeneCards" id="PPP1CB"/>
<dbReference type="HGNC" id="HGNC:9282">
    <property type="gene designation" value="PPP1CB"/>
</dbReference>
<dbReference type="HPA" id="ENSG00000213639">
    <property type="expression patterns" value="Low tissue specificity"/>
</dbReference>
<dbReference type="MalaCards" id="PPP1CB"/>
<dbReference type="MIM" id="600590">
    <property type="type" value="gene"/>
</dbReference>
<dbReference type="MIM" id="617506">
    <property type="type" value="phenotype"/>
</dbReference>
<dbReference type="neXtProt" id="NX_P62140"/>
<dbReference type="OpenTargets" id="ENSG00000213639"/>
<dbReference type="Orphanet" id="2701">
    <property type="disease" value="Noonan syndrome-like disorder with loose anagen hair"/>
</dbReference>
<dbReference type="PharmGKB" id="PA33610"/>
<dbReference type="VEuPathDB" id="HostDB:ENSG00000213639"/>
<dbReference type="eggNOG" id="KOG0374">
    <property type="taxonomic scope" value="Eukaryota"/>
</dbReference>
<dbReference type="GeneTree" id="ENSGT00940000154644"/>
<dbReference type="HOGENOM" id="CLU_004962_0_0_1"/>
<dbReference type="InParanoid" id="P62140"/>
<dbReference type="OMA" id="TVQMSEN"/>
<dbReference type="OrthoDB" id="1930084at2759"/>
<dbReference type="PAN-GO" id="P62140">
    <property type="GO annotations" value="5 GO annotations based on evolutionary models"/>
</dbReference>
<dbReference type="PhylomeDB" id="P62140"/>
<dbReference type="TreeFam" id="TF354243"/>
<dbReference type="BRENDA" id="3.1.3.16">
    <property type="organism ID" value="2681"/>
</dbReference>
<dbReference type="PathwayCommons" id="P62140"/>
<dbReference type="Reactome" id="R-HSA-163560">
    <property type="pathway name" value="Triglyceride catabolism"/>
</dbReference>
<dbReference type="Reactome" id="R-HSA-2173788">
    <property type="pathway name" value="Downregulation of TGF-beta receptor signaling"/>
</dbReference>
<dbReference type="Reactome" id="R-HSA-2565942">
    <property type="pathway name" value="Regulation of PLK1 Activity at G2/M Transition"/>
</dbReference>
<dbReference type="Reactome" id="R-HSA-400253">
    <property type="pathway name" value="Circadian Clock"/>
</dbReference>
<dbReference type="Reactome" id="R-HSA-5625740">
    <property type="pathway name" value="RHO GTPases activate PKNs"/>
</dbReference>
<dbReference type="Reactome" id="R-HSA-5625900">
    <property type="pathway name" value="RHO GTPases activate CIT"/>
</dbReference>
<dbReference type="Reactome" id="R-HSA-5627117">
    <property type="pathway name" value="RHO GTPases Activate ROCKs"/>
</dbReference>
<dbReference type="Reactome" id="R-HSA-5627123">
    <property type="pathway name" value="RHO GTPases activate PAKs"/>
</dbReference>
<dbReference type="Reactome" id="R-HSA-5673000">
    <property type="pathway name" value="RAF activation"/>
</dbReference>
<dbReference type="Reactome" id="R-HSA-9726840">
    <property type="pathway name" value="SHOC2 M1731 mutant abolishes MRAS complex function"/>
</dbReference>
<dbReference type="Reactome" id="R-HSA-9726842">
    <property type="pathway name" value="Gain-of-function MRAS complexes activate RAF signaling"/>
</dbReference>
<dbReference type="Reactome" id="R-HSA-9828806">
    <property type="pathway name" value="Maturation of hRSV A proteins"/>
</dbReference>
<dbReference type="SignaLink" id="P62140"/>
<dbReference type="SIGNOR" id="P62140"/>
<dbReference type="BioGRID-ORCS" id="5500">
    <property type="hits" value="739 hits in 1192 CRISPR screens"/>
</dbReference>
<dbReference type="CD-CODE" id="91857CE7">
    <property type="entry name" value="Nucleolus"/>
</dbReference>
<dbReference type="CD-CODE" id="FB4E32DD">
    <property type="entry name" value="Presynaptic clusters and postsynaptic densities"/>
</dbReference>
<dbReference type="ChiTaRS" id="PPP1CB">
    <property type="organism name" value="human"/>
</dbReference>
<dbReference type="GeneWiki" id="PPP1CB"/>
<dbReference type="GenomeRNAi" id="5500"/>
<dbReference type="Pharos" id="P62140">
    <property type="development level" value="Tbio"/>
</dbReference>
<dbReference type="PRO" id="PR:P62140"/>
<dbReference type="Proteomes" id="UP000005640">
    <property type="component" value="Chromosome 2"/>
</dbReference>
<dbReference type="RNAct" id="P62140">
    <property type="molecule type" value="protein"/>
</dbReference>
<dbReference type="Bgee" id="ENSG00000213639">
    <property type="expression patterns" value="Expressed in calcaneal tendon and 211 other cell types or tissues"/>
</dbReference>
<dbReference type="ExpressionAtlas" id="P62140">
    <property type="expression patterns" value="baseline and differential"/>
</dbReference>
<dbReference type="GO" id="GO:0005737">
    <property type="term" value="C:cytoplasm"/>
    <property type="evidence" value="ECO:0000318"/>
    <property type="project" value="GO_Central"/>
</dbReference>
<dbReference type="GO" id="GO:0005829">
    <property type="term" value="C:cytosol"/>
    <property type="evidence" value="ECO:0000314"/>
    <property type="project" value="HPA"/>
</dbReference>
<dbReference type="GO" id="GO:0070062">
    <property type="term" value="C:extracellular exosome"/>
    <property type="evidence" value="ECO:0007005"/>
    <property type="project" value="UniProtKB"/>
</dbReference>
<dbReference type="GO" id="GO:0005925">
    <property type="term" value="C:focal adhesion"/>
    <property type="evidence" value="ECO:0007005"/>
    <property type="project" value="UniProtKB"/>
</dbReference>
<dbReference type="GO" id="GO:0005730">
    <property type="term" value="C:nucleolus"/>
    <property type="evidence" value="ECO:0007669"/>
    <property type="project" value="UniProtKB-SubCell"/>
</dbReference>
<dbReference type="GO" id="GO:0005654">
    <property type="term" value="C:nucleoplasm"/>
    <property type="evidence" value="ECO:0000314"/>
    <property type="project" value="HPA"/>
</dbReference>
<dbReference type="GO" id="GO:0005634">
    <property type="term" value="C:nucleus"/>
    <property type="evidence" value="ECO:0007005"/>
    <property type="project" value="UniProtKB"/>
</dbReference>
<dbReference type="GO" id="GO:0072357">
    <property type="term" value="C:PTW/PP1 phosphatase complex"/>
    <property type="evidence" value="ECO:0000314"/>
    <property type="project" value="UniProtKB"/>
</dbReference>
<dbReference type="GO" id="GO:0046872">
    <property type="term" value="F:metal ion binding"/>
    <property type="evidence" value="ECO:0007669"/>
    <property type="project" value="UniProtKB-KW"/>
</dbReference>
<dbReference type="GO" id="GO:0017018">
    <property type="term" value="F:myosin phosphatase activity"/>
    <property type="evidence" value="ECO:0000250"/>
    <property type="project" value="UniProtKB"/>
</dbReference>
<dbReference type="GO" id="GO:0050115">
    <property type="term" value="F:myosin-light-chain-phosphatase activity"/>
    <property type="evidence" value="ECO:0000314"/>
    <property type="project" value="UniProtKB"/>
</dbReference>
<dbReference type="GO" id="GO:0016791">
    <property type="term" value="F:phosphatase activity"/>
    <property type="evidence" value="ECO:0000250"/>
    <property type="project" value="UniProtKB"/>
</dbReference>
<dbReference type="GO" id="GO:0019901">
    <property type="term" value="F:protein kinase binding"/>
    <property type="evidence" value="ECO:0000353"/>
    <property type="project" value="UniProtKB"/>
</dbReference>
<dbReference type="GO" id="GO:0004722">
    <property type="term" value="F:protein serine/threonine phosphatase activity"/>
    <property type="evidence" value="ECO:0000318"/>
    <property type="project" value="GO_Central"/>
</dbReference>
<dbReference type="GO" id="GO:0051301">
    <property type="term" value="P:cell division"/>
    <property type="evidence" value="ECO:0007669"/>
    <property type="project" value="UniProtKB-KW"/>
</dbReference>
<dbReference type="GO" id="GO:0032922">
    <property type="term" value="P:circadian regulation of gene expression"/>
    <property type="evidence" value="ECO:0000250"/>
    <property type="project" value="UniProtKB"/>
</dbReference>
<dbReference type="GO" id="GO:0043153">
    <property type="term" value="P:entrainment of circadian clock by photoperiod"/>
    <property type="evidence" value="ECO:0000250"/>
    <property type="project" value="UniProtKB"/>
</dbReference>
<dbReference type="GO" id="GO:0005977">
    <property type="term" value="P:glycogen metabolic process"/>
    <property type="evidence" value="ECO:0007669"/>
    <property type="project" value="UniProtKB-KW"/>
</dbReference>
<dbReference type="GO" id="GO:0000165">
    <property type="term" value="P:MAPK cascade"/>
    <property type="evidence" value="ECO:0000304"/>
    <property type="project" value="Reactome"/>
</dbReference>
<dbReference type="GO" id="GO:0006470">
    <property type="term" value="P:protein dephosphorylation"/>
    <property type="evidence" value="ECO:0000250"/>
    <property type="project" value="UniProtKB"/>
</dbReference>
<dbReference type="GO" id="GO:0030155">
    <property type="term" value="P:regulation of cell adhesion"/>
    <property type="evidence" value="ECO:0000314"/>
    <property type="project" value="UniProtKB"/>
</dbReference>
<dbReference type="GO" id="GO:0042752">
    <property type="term" value="P:regulation of circadian rhythm"/>
    <property type="evidence" value="ECO:0000315"/>
    <property type="project" value="UniProtKB"/>
</dbReference>
<dbReference type="CDD" id="cd07414">
    <property type="entry name" value="MPP_PP1_PPKL"/>
    <property type="match status" value="1"/>
</dbReference>
<dbReference type="FunFam" id="3.60.21.10:FF:000007">
    <property type="entry name" value="Serine/threonine-protein phosphatase"/>
    <property type="match status" value="1"/>
</dbReference>
<dbReference type="Gene3D" id="3.60.21.10">
    <property type="match status" value="1"/>
</dbReference>
<dbReference type="InterPro" id="IPR004843">
    <property type="entry name" value="Calcineurin-like_PHP_ApaH"/>
</dbReference>
<dbReference type="InterPro" id="IPR029052">
    <property type="entry name" value="Metallo-depent_PP-like"/>
</dbReference>
<dbReference type="InterPro" id="IPR050341">
    <property type="entry name" value="PP1_catalytic_subunit"/>
</dbReference>
<dbReference type="InterPro" id="IPR006186">
    <property type="entry name" value="Ser/Thr-sp_prot-phosphatase"/>
</dbReference>
<dbReference type="InterPro" id="IPR031675">
    <property type="entry name" value="STPPase_N"/>
</dbReference>
<dbReference type="PANTHER" id="PTHR11668">
    <property type="entry name" value="SERINE/THREONINE PROTEIN PHOSPHATASE"/>
    <property type="match status" value="1"/>
</dbReference>
<dbReference type="PANTHER" id="PTHR11668:SF472">
    <property type="entry name" value="SERINE_THREONINE-PROTEIN PHOSPHATASE PP1-BETA CATALYTIC SUBUNIT"/>
    <property type="match status" value="1"/>
</dbReference>
<dbReference type="Pfam" id="PF00149">
    <property type="entry name" value="Metallophos"/>
    <property type="match status" value="1"/>
</dbReference>
<dbReference type="Pfam" id="PF16891">
    <property type="entry name" value="STPPase_N"/>
    <property type="match status" value="1"/>
</dbReference>
<dbReference type="PRINTS" id="PR00114">
    <property type="entry name" value="STPHPHTASE"/>
</dbReference>
<dbReference type="SMART" id="SM00156">
    <property type="entry name" value="PP2Ac"/>
    <property type="match status" value="1"/>
</dbReference>
<dbReference type="SUPFAM" id="SSF56300">
    <property type="entry name" value="Metallo-dependent phosphatases"/>
    <property type="match status" value="1"/>
</dbReference>
<dbReference type="PROSITE" id="PS00125">
    <property type="entry name" value="SER_THR_PHOSPHATASE"/>
    <property type="match status" value="1"/>
</dbReference>
<keyword id="KW-0007">Acetylation</keyword>
<keyword id="KW-0090">Biological rhythms</keyword>
<keyword id="KW-0119">Carbohydrate metabolism</keyword>
<keyword id="KW-0131">Cell cycle</keyword>
<keyword id="KW-0132">Cell division</keyword>
<keyword id="KW-0963">Cytoplasm</keyword>
<keyword id="KW-0903">Direct protein sequencing</keyword>
<keyword id="KW-0225">Disease variant</keyword>
<keyword id="KW-0321">Glycogen metabolism</keyword>
<keyword id="KW-0378">Hydrolase</keyword>
<keyword id="KW-0464">Manganese</keyword>
<keyword id="KW-0479">Metal-binding</keyword>
<keyword id="KW-0539">Nucleus</keyword>
<keyword id="KW-0597">Phosphoprotein</keyword>
<keyword id="KW-0904">Protein phosphatase</keyword>
<keyword id="KW-1267">Proteomics identification</keyword>
<keyword id="KW-1185">Reference proteome</keyword>
<sequence length="327" mass="37187">MADGELNVDSLITRLLEVRGCRPGKIVQMTEAEVRGLCIKSREIFLSQPILLELEAPLKICGDIHGQYTDLLRLFEYGGFPPEANYLFLGDYVDRGKQSLETICLLLAYKIKYPENFFLLRGNHECASINRIYGFYDECKRRFNIKLWKTFTDCFNCLPIAAIVDEKIFCCHGGLSPDLQSMEQIRRIMRPTDVPDTGLLCDLLWSDPDKDVQGWGENDRGVSFTFGADVVSKFLNRHDLDLICRAHQVVEDGYEFFAKRQLVTLFSAPNYCGEFDNAGGMMSVDETLMCSFQILKPSEKKAKYQYGGLNSGRPVTPPRTANPPKKR</sequence>
<protein>
    <recommendedName>
        <fullName>Serine/threonine-protein phosphatase PP1-beta catalytic subunit</fullName>
        <shortName>PP-1B</shortName>
        <shortName>PPP1CD</shortName>
        <ecNumber evidence="25 26 27">3.1.3.16</ecNumber>
        <ecNumber>3.1.3.53</ecNumber>
    </recommendedName>
</protein>
<organism>
    <name type="scientific">Homo sapiens</name>
    <name type="common">Human</name>
    <dbReference type="NCBI Taxonomy" id="9606"/>
    <lineage>
        <taxon>Eukaryota</taxon>
        <taxon>Metazoa</taxon>
        <taxon>Chordata</taxon>
        <taxon>Craniata</taxon>
        <taxon>Vertebrata</taxon>
        <taxon>Euteleostomi</taxon>
        <taxon>Mammalia</taxon>
        <taxon>Eutheria</taxon>
        <taxon>Euarchontoglires</taxon>
        <taxon>Primates</taxon>
        <taxon>Haplorrhini</taxon>
        <taxon>Catarrhini</taxon>
        <taxon>Hominidae</taxon>
        <taxon>Homo</taxon>
    </lineage>
</organism>